<protein>
    <recommendedName>
        <fullName>Protein MAK16 homolog</fullName>
    </recommendedName>
    <alternativeName>
        <fullName>MAK16-like protein</fullName>
    </alternativeName>
</protein>
<sequence>MQHDDVIWDVVGNKQFCSFKIKTKTQNFCRNEYNITGLCNRSACPLANSQYATIKEEKGICYLYMKTIERAAFPARMWERVRLSKNYEQALEQIDESLIYWPRFIRHKCKQRFTKITQYLIRIRKLTLKRQRKLVPLSRKVERREKRREEKALVAAQLDNAIEKELLERLKQGAYGDIYNFPIQAFDKALEQQEDASASESSEEEEEEDDEESGKREFVEDEDVDESDLSDFEDMDKLGASSEEEKSSGEEESSEEEEEKAPKAKSKGKAPVKGQLIRKRQHVEIEYEQETEPQHKAKVT</sequence>
<feature type="chain" id="PRO_0000203799" description="Protein MAK16 homolog">
    <location>
        <begin position="1"/>
        <end position="300"/>
    </location>
</feature>
<feature type="region of interest" description="Disordered" evidence="2">
    <location>
        <begin position="191"/>
        <end position="300"/>
    </location>
</feature>
<feature type="compositionally biased region" description="Acidic residues" evidence="2">
    <location>
        <begin position="201"/>
        <end position="212"/>
    </location>
</feature>
<feature type="compositionally biased region" description="Acidic residues" evidence="2">
    <location>
        <begin position="219"/>
        <end position="234"/>
    </location>
</feature>
<feature type="compositionally biased region" description="Acidic residues" evidence="2">
    <location>
        <begin position="250"/>
        <end position="259"/>
    </location>
</feature>
<feature type="compositionally biased region" description="Basic residues" evidence="2">
    <location>
        <begin position="263"/>
        <end position="281"/>
    </location>
</feature>
<reference key="1">
    <citation type="submission" date="2003-11" db="EMBL/GenBank/DDBJ databases">
        <authorList>
            <consortium name="NIH - Xenopus Gene Collection (XGC) project"/>
        </authorList>
    </citation>
    <scope>NUCLEOTIDE SEQUENCE [LARGE SCALE MRNA]</scope>
    <source>
        <tissue>Embryo</tissue>
    </source>
</reference>
<gene>
    <name type="primary">mak16</name>
    <name type="synonym">mak16l</name>
</gene>
<comment type="subcellular location">
    <subcellularLocation>
        <location evidence="1">Nucleus</location>
        <location evidence="1">Nucleolus</location>
    </subcellularLocation>
</comment>
<comment type="similarity">
    <text evidence="3">Belongs to the MAK16 family.</text>
</comment>
<dbReference type="EMBL" id="BC061599">
    <property type="protein sequence ID" value="AAH61599.1"/>
    <property type="molecule type" value="mRNA"/>
</dbReference>
<dbReference type="RefSeq" id="NP_988927.1">
    <property type="nucleotide sequence ID" value="NM_203596.1"/>
</dbReference>
<dbReference type="SMR" id="Q6P7N1"/>
<dbReference type="FunCoup" id="Q6P7N1">
    <property type="interactions" value="2999"/>
</dbReference>
<dbReference type="STRING" id="8364.ENSXETP00000020365"/>
<dbReference type="PaxDb" id="8364-ENSXETP00000035979"/>
<dbReference type="DNASU" id="394523"/>
<dbReference type="GeneID" id="394523"/>
<dbReference type="KEGG" id="xtr:394523"/>
<dbReference type="AGR" id="Xenbase:XB-GENE-5928119"/>
<dbReference type="CTD" id="84549"/>
<dbReference type="Xenbase" id="XB-GENE-5928119">
    <property type="gene designation" value="mak16"/>
</dbReference>
<dbReference type="eggNOG" id="KOG3064">
    <property type="taxonomic scope" value="Eukaryota"/>
</dbReference>
<dbReference type="HOGENOM" id="CLU_050888_2_0_1"/>
<dbReference type="InParanoid" id="Q6P7N1"/>
<dbReference type="OMA" id="DKGQNFC"/>
<dbReference type="OrthoDB" id="10251342at2759"/>
<dbReference type="PhylomeDB" id="Q6P7N1"/>
<dbReference type="TreeFam" id="TF105759"/>
<dbReference type="Proteomes" id="UP000008143">
    <property type="component" value="Chromosome 3"/>
</dbReference>
<dbReference type="Bgee" id="ENSXETG00000016495">
    <property type="expression patterns" value="Expressed in testis and 13 other cell types or tissues"/>
</dbReference>
<dbReference type="GO" id="GO:0005730">
    <property type="term" value="C:nucleolus"/>
    <property type="evidence" value="ECO:0007669"/>
    <property type="project" value="UniProtKB-SubCell"/>
</dbReference>
<dbReference type="FunFam" id="3.30.390.110:FF:000003">
    <property type="entry name" value="Protein MAK16 homolog"/>
    <property type="match status" value="1"/>
</dbReference>
<dbReference type="Gene3D" id="3.30.390.110">
    <property type="match status" value="1"/>
</dbReference>
<dbReference type="InterPro" id="IPR006958">
    <property type="entry name" value="Mak16"/>
</dbReference>
<dbReference type="InterPro" id="IPR029004">
    <property type="entry name" value="Ribosomal_eL28/Mak16"/>
</dbReference>
<dbReference type="PANTHER" id="PTHR23405">
    <property type="entry name" value="MAINTENANCE OF KILLER 16 MAK16 PROTEIN-RELATED"/>
    <property type="match status" value="1"/>
</dbReference>
<dbReference type="PANTHER" id="PTHR23405:SF4">
    <property type="entry name" value="PROTEIN MAK16 HOMOLOG"/>
    <property type="match status" value="1"/>
</dbReference>
<dbReference type="Pfam" id="PF04874">
    <property type="entry name" value="Mak16"/>
    <property type="match status" value="1"/>
</dbReference>
<dbReference type="Pfam" id="PF01778">
    <property type="entry name" value="Ribosomal_L28e"/>
    <property type="match status" value="1"/>
</dbReference>
<dbReference type="PIRSF" id="PIRSF003352">
    <property type="entry name" value="MAK16"/>
    <property type="match status" value="1"/>
</dbReference>
<evidence type="ECO:0000250" key="1"/>
<evidence type="ECO:0000256" key="2">
    <source>
        <dbReference type="SAM" id="MobiDB-lite"/>
    </source>
</evidence>
<evidence type="ECO:0000305" key="3"/>
<keyword id="KW-0539">Nucleus</keyword>
<keyword id="KW-1185">Reference proteome</keyword>
<name>MAK16_XENTR</name>
<accession>Q6P7N1</accession>
<organism>
    <name type="scientific">Xenopus tropicalis</name>
    <name type="common">Western clawed frog</name>
    <name type="synonym">Silurana tropicalis</name>
    <dbReference type="NCBI Taxonomy" id="8364"/>
    <lineage>
        <taxon>Eukaryota</taxon>
        <taxon>Metazoa</taxon>
        <taxon>Chordata</taxon>
        <taxon>Craniata</taxon>
        <taxon>Vertebrata</taxon>
        <taxon>Euteleostomi</taxon>
        <taxon>Amphibia</taxon>
        <taxon>Batrachia</taxon>
        <taxon>Anura</taxon>
        <taxon>Pipoidea</taxon>
        <taxon>Pipidae</taxon>
        <taxon>Xenopodinae</taxon>
        <taxon>Xenopus</taxon>
        <taxon>Silurana</taxon>
    </lineage>
</organism>
<proteinExistence type="evidence at transcript level"/>